<proteinExistence type="inferred from homology"/>
<feature type="chain" id="PRO_0000215739" description="ATP-dependent Clp protease adapter protein ClpS 2">
    <location>
        <begin position="1"/>
        <end position="101"/>
    </location>
</feature>
<name>CLPS2_RHILO</name>
<evidence type="ECO:0000255" key="1">
    <source>
        <dbReference type="HAMAP-Rule" id="MF_00302"/>
    </source>
</evidence>
<reference key="1">
    <citation type="journal article" date="2000" name="DNA Res.">
        <title>Complete genome structure of the nitrogen-fixing symbiotic bacterium Mesorhizobium loti.</title>
        <authorList>
            <person name="Kaneko T."/>
            <person name="Nakamura Y."/>
            <person name="Sato S."/>
            <person name="Asamizu E."/>
            <person name="Kato T."/>
            <person name="Sasamoto S."/>
            <person name="Watanabe A."/>
            <person name="Idesawa K."/>
            <person name="Ishikawa A."/>
            <person name="Kawashima K."/>
            <person name="Kimura T."/>
            <person name="Kishida Y."/>
            <person name="Kiyokawa C."/>
            <person name="Kohara M."/>
            <person name="Matsumoto M."/>
            <person name="Matsuno A."/>
            <person name="Mochizuki Y."/>
            <person name="Nakayama S."/>
            <person name="Nakazaki N."/>
            <person name="Shimpo S."/>
            <person name="Sugimoto M."/>
            <person name="Takeuchi C."/>
            <person name="Yamada M."/>
            <person name="Tabata S."/>
        </authorList>
    </citation>
    <scope>NUCLEOTIDE SEQUENCE [LARGE SCALE GENOMIC DNA]</scope>
    <source>
        <strain>LMG 29417 / CECT 9101 / MAFF 303099</strain>
    </source>
</reference>
<dbReference type="EMBL" id="BA000012">
    <property type="protein sequence ID" value="BAB49794.1"/>
    <property type="molecule type" value="Genomic_DNA"/>
</dbReference>
<dbReference type="SMR" id="Q98HS2"/>
<dbReference type="KEGG" id="mlo:mll2736"/>
<dbReference type="eggNOG" id="COG2127">
    <property type="taxonomic scope" value="Bacteria"/>
</dbReference>
<dbReference type="HOGENOM" id="CLU_134358_3_0_5"/>
<dbReference type="Proteomes" id="UP000000552">
    <property type="component" value="Chromosome"/>
</dbReference>
<dbReference type="GO" id="GO:0030163">
    <property type="term" value="P:protein catabolic process"/>
    <property type="evidence" value="ECO:0007669"/>
    <property type="project" value="InterPro"/>
</dbReference>
<dbReference type="GO" id="GO:0006508">
    <property type="term" value="P:proteolysis"/>
    <property type="evidence" value="ECO:0007669"/>
    <property type="project" value="UniProtKB-UniRule"/>
</dbReference>
<dbReference type="FunFam" id="3.30.1390.10:FF:000002">
    <property type="entry name" value="ATP-dependent Clp protease adapter protein ClpS"/>
    <property type="match status" value="1"/>
</dbReference>
<dbReference type="Gene3D" id="3.30.1390.10">
    <property type="match status" value="1"/>
</dbReference>
<dbReference type="HAMAP" id="MF_00302">
    <property type="entry name" value="ClpS"/>
    <property type="match status" value="1"/>
</dbReference>
<dbReference type="InterPro" id="IPR022935">
    <property type="entry name" value="ClpS"/>
</dbReference>
<dbReference type="InterPro" id="IPR003769">
    <property type="entry name" value="ClpS_core"/>
</dbReference>
<dbReference type="InterPro" id="IPR014719">
    <property type="entry name" value="Ribosomal_bL12_C/ClpS-like"/>
</dbReference>
<dbReference type="NCBIfam" id="NF009564">
    <property type="entry name" value="PRK13019.1-4"/>
    <property type="match status" value="1"/>
</dbReference>
<dbReference type="PANTHER" id="PTHR33473:SF19">
    <property type="entry name" value="ATP-DEPENDENT CLP PROTEASE ADAPTER PROTEIN CLPS"/>
    <property type="match status" value="1"/>
</dbReference>
<dbReference type="PANTHER" id="PTHR33473">
    <property type="entry name" value="ATP-DEPENDENT CLP PROTEASE ADAPTER PROTEIN CLPS1, CHLOROPLASTIC"/>
    <property type="match status" value="1"/>
</dbReference>
<dbReference type="Pfam" id="PF02617">
    <property type="entry name" value="ClpS"/>
    <property type="match status" value="1"/>
</dbReference>
<dbReference type="SUPFAM" id="SSF54736">
    <property type="entry name" value="ClpS-like"/>
    <property type="match status" value="1"/>
</dbReference>
<accession>Q98HS2</accession>
<organism>
    <name type="scientific">Mesorhizobium japonicum (strain LMG 29417 / CECT 9101 / MAFF 303099)</name>
    <name type="common">Mesorhizobium loti (strain MAFF 303099)</name>
    <dbReference type="NCBI Taxonomy" id="266835"/>
    <lineage>
        <taxon>Bacteria</taxon>
        <taxon>Pseudomonadati</taxon>
        <taxon>Pseudomonadota</taxon>
        <taxon>Alphaproteobacteria</taxon>
        <taxon>Hyphomicrobiales</taxon>
        <taxon>Phyllobacteriaceae</taxon>
        <taxon>Mesorhizobium</taxon>
    </lineage>
</organism>
<comment type="function">
    <text evidence="1">Involved in the modulation of the specificity of the ClpAP-mediated ATP-dependent protein degradation.</text>
</comment>
<comment type="subunit">
    <text evidence="1">Binds to the N-terminal domain of the chaperone ClpA.</text>
</comment>
<comment type="similarity">
    <text evidence="1">Belongs to the ClpS family.</text>
</comment>
<gene>
    <name evidence="1" type="primary">clpS2</name>
    <name type="ordered locus">mll2736</name>
</gene>
<sequence>MPEITTKPRTKVKPQTERPKLYKVILINDDFTPREFVVTVLKGEFKLSEDQAHRIMITAHRRGVCVVAVFTKDVAETKATRATDAGKAKGYPLLFTTEPEE</sequence>
<protein>
    <recommendedName>
        <fullName evidence="1">ATP-dependent Clp protease adapter protein ClpS 2</fullName>
    </recommendedName>
</protein>